<comment type="function">
    <text evidence="1 2">May be involved in the storage of translationally inactive mRNAs and protect them from degradation (By similarity). Plays a role in control of mRNA translation (By similarity).</text>
</comment>
<comment type="subunit">
    <text evidence="1 7">Component of a ribonucleoprotein (RNP) complex, at least composed of cpeb1, lsm14b/rap55b, ddx6/Xp54, ybx2/frgy2, pat1/P100, eif4enif1/4E-T and eif4e1b. Different translationally-repressed mRNP complexes probably exist that contain either lsm14a/rap55a or lsm14b/rap55b depending on the developmental stage (By similarity). Component of a ribonucleoprotein (RNP) complex, composed at least of elavl1/elrA and/or elavl2/elrB, igf2bp3/vg1RBP, ddx6/Xp54, ybx2/frgy2, lsm14b/rap55b and, in a subset of RNP complexes, stau1/staufen.</text>
</comment>
<comment type="similarity">
    <text evidence="3">Belongs to the LSM14 family.</text>
</comment>
<feature type="chain" id="PRO_0000391382" description="Protein LSM14 homolog B-B">
    <location>
        <begin position="1"/>
        <end position="380"/>
    </location>
</feature>
<feature type="domain" description="Sm" evidence="5">
    <location>
        <begin position="1"/>
        <end position="81"/>
    </location>
</feature>
<feature type="domain" description="DFDF" evidence="4">
    <location>
        <begin position="236"/>
        <end position="272"/>
    </location>
</feature>
<feature type="region of interest" description="Disordered" evidence="6">
    <location>
        <begin position="160"/>
        <end position="241"/>
    </location>
</feature>
<feature type="region of interest" description="Disordered" evidence="6">
    <location>
        <begin position="268"/>
        <end position="312"/>
    </location>
</feature>
<feature type="region of interest" description="Disordered" evidence="6">
    <location>
        <begin position="352"/>
        <end position="380"/>
    </location>
</feature>
<feature type="short sequence motif" description="FFD box">
    <location>
        <begin position="307"/>
        <end position="323"/>
    </location>
</feature>
<feature type="short sequence motif" description="TFG box">
    <location>
        <begin position="325"/>
        <end position="345"/>
    </location>
</feature>
<feature type="compositionally biased region" description="Low complexity" evidence="6">
    <location>
        <begin position="164"/>
        <end position="175"/>
    </location>
</feature>
<feature type="compositionally biased region" description="Basic residues" evidence="6">
    <location>
        <begin position="214"/>
        <end position="230"/>
    </location>
</feature>
<feature type="compositionally biased region" description="Basic and acidic residues" evidence="6">
    <location>
        <begin position="268"/>
        <end position="287"/>
    </location>
</feature>
<feature type="compositionally biased region" description="Polar residues" evidence="6">
    <location>
        <begin position="369"/>
        <end position="380"/>
    </location>
</feature>
<dbReference type="EMBL" id="BC100174">
    <property type="protein sequence ID" value="AAI00175.1"/>
    <property type="molecule type" value="mRNA"/>
</dbReference>
<dbReference type="RefSeq" id="NP_001089649.1">
    <property type="nucleotide sequence ID" value="NM_001096180.1"/>
</dbReference>
<dbReference type="SMR" id="Q498K9"/>
<dbReference type="BioGRID" id="592490">
    <property type="interactions" value="1"/>
</dbReference>
<dbReference type="IntAct" id="Q498K9">
    <property type="interactions" value="1"/>
</dbReference>
<dbReference type="DNASU" id="734709"/>
<dbReference type="GeneID" id="734709"/>
<dbReference type="KEGG" id="xla:734709"/>
<dbReference type="AGR" id="Xenbase:XB-GENE-5893369"/>
<dbReference type="CTD" id="734709"/>
<dbReference type="Xenbase" id="XB-GENE-5893369">
    <property type="gene designation" value="lsm14b.S"/>
</dbReference>
<dbReference type="OrthoDB" id="21539at2759"/>
<dbReference type="CD-CODE" id="78E86D56">
    <property type="entry name" value="Mitochondrial cloud"/>
</dbReference>
<dbReference type="Proteomes" id="UP000186698">
    <property type="component" value="Chromosome 9_10S"/>
</dbReference>
<dbReference type="Bgee" id="734709">
    <property type="expression patterns" value="Expressed in oocyte and 19 other cell types or tissues"/>
</dbReference>
<dbReference type="GO" id="GO:1990904">
    <property type="term" value="C:ribonucleoprotein complex"/>
    <property type="evidence" value="ECO:0000353"/>
    <property type="project" value="UniProtKB"/>
</dbReference>
<dbReference type="GO" id="GO:0003729">
    <property type="term" value="F:mRNA binding"/>
    <property type="evidence" value="ECO:0000318"/>
    <property type="project" value="GO_Central"/>
</dbReference>
<dbReference type="GO" id="GO:0006417">
    <property type="term" value="P:regulation of translation"/>
    <property type="evidence" value="ECO:0007669"/>
    <property type="project" value="UniProtKB-KW"/>
</dbReference>
<dbReference type="CDD" id="cd01736">
    <property type="entry name" value="LSm14_N"/>
    <property type="match status" value="1"/>
</dbReference>
<dbReference type="FunFam" id="2.30.30.100:FF:000006">
    <property type="entry name" value="Protein LSM14 homolog A isoform b"/>
    <property type="match status" value="1"/>
</dbReference>
<dbReference type="Gene3D" id="2.30.30.100">
    <property type="match status" value="1"/>
</dbReference>
<dbReference type="InterPro" id="IPR025762">
    <property type="entry name" value="DFDF"/>
</dbReference>
<dbReference type="InterPro" id="IPR019050">
    <property type="entry name" value="FDF_dom"/>
</dbReference>
<dbReference type="InterPro" id="IPR025761">
    <property type="entry name" value="FFD_box"/>
</dbReference>
<dbReference type="InterPro" id="IPR025609">
    <property type="entry name" value="Lsm14-like_N"/>
</dbReference>
<dbReference type="InterPro" id="IPR010920">
    <property type="entry name" value="LSM_dom_sf"/>
</dbReference>
<dbReference type="InterPro" id="IPR047575">
    <property type="entry name" value="Sm"/>
</dbReference>
<dbReference type="InterPro" id="IPR025768">
    <property type="entry name" value="TFG_box"/>
</dbReference>
<dbReference type="PANTHER" id="PTHR13586:SF1">
    <property type="entry name" value="PROTEIN LSM14 HOMOLOG B"/>
    <property type="match status" value="1"/>
</dbReference>
<dbReference type="PANTHER" id="PTHR13586">
    <property type="entry name" value="SCD6 PROTEIN-RELATED"/>
    <property type="match status" value="1"/>
</dbReference>
<dbReference type="Pfam" id="PF09532">
    <property type="entry name" value="FDF"/>
    <property type="match status" value="1"/>
</dbReference>
<dbReference type="Pfam" id="PF12701">
    <property type="entry name" value="LSM14"/>
    <property type="match status" value="1"/>
</dbReference>
<dbReference type="SMART" id="SM01199">
    <property type="entry name" value="FDF"/>
    <property type="match status" value="1"/>
</dbReference>
<dbReference type="SMART" id="SM01271">
    <property type="entry name" value="LSM14"/>
    <property type="match status" value="1"/>
</dbReference>
<dbReference type="SUPFAM" id="SSF50182">
    <property type="entry name" value="Sm-like ribonucleoproteins"/>
    <property type="match status" value="1"/>
</dbReference>
<dbReference type="PROSITE" id="PS51512">
    <property type="entry name" value="DFDF"/>
    <property type="match status" value="1"/>
</dbReference>
<dbReference type="PROSITE" id="PS51513">
    <property type="entry name" value="FFD"/>
    <property type="match status" value="1"/>
</dbReference>
<dbReference type="PROSITE" id="PS52002">
    <property type="entry name" value="SM"/>
    <property type="match status" value="1"/>
</dbReference>
<dbReference type="PROSITE" id="PS51536">
    <property type="entry name" value="TFG"/>
    <property type="match status" value="1"/>
</dbReference>
<reference evidence="10" key="1">
    <citation type="submission" date="2005-08" db="EMBL/GenBank/DDBJ databases">
        <authorList>
            <consortium name="NIH - Xenopus Gene Collection (XGC) project"/>
        </authorList>
    </citation>
    <scope>NUCLEOTIDE SEQUENCE [LARGE SCALE MRNA]</scope>
    <source>
        <tissue evidence="10">Ovary</tissue>
    </source>
</reference>
<reference evidence="9" key="2">
    <citation type="journal article" date="2009" name="J. Biol. Chem.">
        <title>Participation of Xenopus Elr-type proteins in vegetal mRNA localization during oogenesis.</title>
        <authorList>
            <person name="Arthur P.K."/>
            <person name="Claussen M."/>
            <person name="Koch S."/>
            <person name="Tarbashevich K."/>
            <person name="Jahn O."/>
            <person name="Pieler T."/>
        </authorList>
    </citation>
    <scope>IDENTIFICATION IN A RIBONUCLEOPROTEIN COMPLEX WITH ELAVL1; ELAVL2; IGF2BP3; STAU1; DDX6 AND YBX2</scope>
</reference>
<keyword id="KW-0217">Developmental protein</keyword>
<keyword id="KW-1185">Reference proteome</keyword>
<keyword id="KW-0687">Ribonucleoprotein</keyword>
<keyword id="KW-0810">Translation regulation</keyword>
<organism>
    <name type="scientific">Xenopus laevis</name>
    <name type="common">African clawed frog</name>
    <dbReference type="NCBI Taxonomy" id="8355"/>
    <lineage>
        <taxon>Eukaryota</taxon>
        <taxon>Metazoa</taxon>
        <taxon>Chordata</taxon>
        <taxon>Craniata</taxon>
        <taxon>Vertebrata</taxon>
        <taxon>Euteleostomi</taxon>
        <taxon>Amphibia</taxon>
        <taxon>Batrachia</taxon>
        <taxon>Anura</taxon>
        <taxon>Pipoidea</taxon>
        <taxon>Pipidae</taxon>
        <taxon>Xenopodinae</taxon>
        <taxon>Xenopus</taxon>
        <taxon>Xenopus</taxon>
    </lineage>
</organism>
<protein>
    <recommendedName>
        <fullName>Protein LSM14 homolog B-B</fullName>
    </recommendedName>
    <alternativeName>
        <fullName evidence="8">RNA-associated protein 42</fullName>
        <shortName evidence="8">xRAP42</shortName>
    </alternativeName>
    <alternativeName>
        <fullName>RNA-associated protein 55B-B</fullName>
        <shortName>RAP55B-B</shortName>
    </alternativeName>
</protein>
<sequence length="380" mass="41868">MSSGTPYIGSKISLISKAQIRYEGILYTIDTENSTVALAKVRSFGTEDRPTDRPAPPREEVYEYIIFRGSDIKDITVCEPPKASHALSQDPAIVQSSLGSAASYQPSVPYSPFRGMPTYSQLAATSLLSQQYAASLGLAGFPSIPVRKSPMVEQAVQTGPLENQAQKKVQQAKGAPVGLRGVRQSGPQSQPAPLNVPPPAAPVLGTVNDENRRPPRRRSGNRRTRNRSRGQNRPTTVKENAIKFEGDFDFESANAQFNREELDKEFKDKLNFKDDKPEKAGEEKTDSGVETQNSDGNPEEDPLGPNTYYDRSKSFFDNISSEMKSRRTTWAEERKLNTETFGVSGRFLRGRSFRGGFRGGRGSAAPRRNQTTQRAGTGRV</sequence>
<proteinExistence type="evidence at protein level"/>
<name>L14BB_XENLA</name>
<evidence type="ECO:0000250" key="1">
    <source>
        <dbReference type="UniProtKB" id="Q68FI1"/>
    </source>
</evidence>
<evidence type="ECO:0000250" key="2">
    <source>
        <dbReference type="UniProtKB" id="Q8CGC4"/>
    </source>
</evidence>
<evidence type="ECO:0000255" key="3"/>
<evidence type="ECO:0000255" key="4">
    <source>
        <dbReference type="PROSITE-ProRule" id="PRU00845"/>
    </source>
</evidence>
<evidence type="ECO:0000255" key="5">
    <source>
        <dbReference type="PROSITE-ProRule" id="PRU01346"/>
    </source>
</evidence>
<evidence type="ECO:0000256" key="6">
    <source>
        <dbReference type="SAM" id="MobiDB-lite"/>
    </source>
</evidence>
<evidence type="ECO:0000269" key="7">
    <source>
    </source>
</evidence>
<evidence type="ECO:0000303" key="8">
    <source>
    </source>
</evidence>
<evidence type="ECO:0000305" key="9"/>
<evidence type="ECO:0000312" key="10">
    <source>
        <dbReference type="EMBL" id="AAI00175.1"/>
    </source>
</evidence>
<accession>Q498K9</accession>
<gene>
    <name type="primary">lsm14b-b</name>
    <name type="synonym">lsm14b</name>
    <name evidence="8" type="synonym">rap42</name>
    <name type="synonym">rap55b-b</name>
</gene>